<accession>Q6FU61</accession>
<keyword id="KW-0143">Chaperone</keyword>
<keyword id="KW-0186">Copper</keyword>
<keyword id="KW-0963">Cytoplasm</keyword>
<keyword id="KW-1015">Disulfide bond</keyword>
<keyword id="KW-0479">Metal-binding</keyword>
<keyword id="KW-1185">Reference proteome</keyword>
<keyword id="KW-0862">Zinc</keyword>
<evidence type="ECO:0000250" key="1"/>
<evidence type="ECO:0000250" key="2">
    <source>
        <dbReference type="UniProtKB" id="P40202"/>
    </source>
</evidence>
<evidence type="ECO:0000255" key="3">
    <source>
        <dbReference type="PROSITE-ProRule" id="PRU00280"/>
    </source>
</evidence>
<evidence type="ECO:0000305" key="4"/>
<dbReference type="EMBL" id="CR380952">
    <property type="protein sequence ID" value="CAG59157.1"/>
    <property type="molecule type" value="Genomic_DNA"/>
</dbReference>
<dbReference type="SMR" id="Q6FU61"/>
<dbReference type="FunCoup" id="Q6FU61">
    <property type="interactions" value="313"/>
</dbReference>
<dbReference type="STRING" id="284593.Q6FU61"/>
<dbReference type="EnsemblFungi" id="CAGL0F06017g-T">
    <property type="protein sequence ID" value="CAGL0F06017g-T-p1"/>
    <property type="gene ID" value="CAGL0F06017g"/>
</dbReference>
<dbReference type="KEGG" id="cgr:2887621"/>
<dbReference type="CGD" id="CAL0130932">
    <property type="gene designation" value="LYS7"/>
</dbReference>
<dbReference type="VEuPathDB" id="FungiDB:CAGL0F06017g"/>
<dbReference type="eggNOG" id="KOG4656">
    <property type="taxonomic scope" value="Eukaryota"/>
</dbReference>
<dbReference type="HOGENOM" id="CLU_056632_0_0_1"/>
<dbReference type="InParanoid" id="Q6FU61"/>
<dbReference type="OMA" id="KNVWEER"/>
<dbReference type="Proteomes" id="UP000002428">
    <property type="component" value="Chromosome F"/>
</dbReference>
<dbReference type="GO" id="GO:0005829">
    <property type="term" value="C:cytosol"/>
    <property type="evidence" value="ECO:0007669"/>
    <property type="project" value="EnsemblFungi"/>
</dbReference>
<dbReference type="GO" id="GO:0005743">
    <property type="term" value="C:mitochondrial inner membrane"/>
    <property type="evidence" value="ECO:0007669"/>
    <property type="project" value="EnsemblFungi"/>
</dbReference>
<dbReference type="GO" id="GO:0005634">
    <property type="term" value="C:nucleus"/>
    <property type="evidence" value="ECO:0007669"/>
    <property type="project" value="EnsemblFungi"/>
</dbReference>
<dbReference type="GO" id="GO:0101031">
    <property type="term" value="C:protein folding chaperone complex"/>
    <property type="evidence" value="ECO:0007669"/>
    <property type="project" value="EnsemblFungi"/>
</dbReference>
<dbReference type="GO" id="GO:1902693">
    <property type="term" value="C:superoxide dismutase complex"/>
    <property type="evidence" value="ECO:0007669"/>
    <property type="project" value="EnsemblFungi"/>
</dbReference>
<dbReference type="GO" id="GO:0005507">
    <property type="term" value="F:copper ion binding"/>
    <property type="evidence" value="ECO:0007669"/>
    <property type="project" value="InterPro"/>
</dbReference>
<dbReference type="GO" id="GO:0016532">
    <property type="term" value="F:superoxide dismutase copper chaperone activity"/>
    <property type="evidence" value="ECO:0007669"/>
    <property type="project" value="EnsemblFungi"/>
</dbReference>
<dbReference type="GO" id="GO:0006825">
    <property type="term" value="P:copper ion transport"/>
    <property type="evidence" value="ECO:0007669"/>
    <property type="project" value="EnsemblFungi"/>
</dbReference>
<dbReference type="GO" id="GO:0019430">
    <property type="term" value="P:removal of superoxide radicals"/>
    <property type="evidence" value="ECO:0007669"/>
    <property type="project" value="EnsemblFungi"/>
</dbReference>
<dbReference type="CDD" id="cd00371">
    <property type="entry name" value="HMA"/>
    <property type="match status" value="1"/>
</dbReference>
<dbReference type="FunFam" id="3.30.70.100:FF:000038">
    <property type="entry name" value="Superoxide dismutase 1 copper chaperone"/>
    <property type="match status" value="1"/>
</dbReference>
<dbReference type="Gene3D" id="3.30.70.100">
    <property type="match status" value="1"/>
</dbReference>
<dbReference type="Gene3D" id="2.60.40.200">
    <property type="entry name" value="Superoxide dismutase, copper/zinc binding domain"/>
    <property type="match status" value="1"/>
</dbReference>
<dbReference type="InterPro" id="IPR006121">
    <property type="entry name" value="HMA_dom"/>
</dbReference>
<dbReference type="InterPro" id="IPR036163">
    <property type="entry name" value="HMA_dom_sf"/>
</dbReference>
<dbReference type="InterPro" id="IPR036423">
    <property type="entry name" value="SOD-like_Cu/Zn_dom_sf"/>
</dbReference>
<dbReference type="InterPro" id="IPR024134">
    <property type="entry name" value="SOD_Cu/Zn_/chaperone"/>
</dbReference>
<dbReference type="PANTHER" id="PTHR10003">
    <property type="entry name" value="SUPEROXIDE DISMUTASE CU-ZN -RELATED"/>
    <property type="match status" value="1"/>
</dbReference>
<dbReference type="Pfam" id="PF00403">
    <property type="entry name" value="HMA"/>
    <property type="match status" value="1"/>
</dbReference>
<dbReference type="SUPFAM" id="SSF49329">
    <property type="entry name" value="Cu,Zn superoxide dismutase-like"/>
    <property type="match status" value="1"/>
</dbReference>
<dbReference type="SUPFAM" id="SSF55008">
    <property type="entry name" value="HMA, heavy metal-associated domain"/>
    <property type="match status" value="1"/>
</dbReference>
<dbReference type="PROSITE" id="PS50846">
    <property type="entry name" value="HMA_2"/>
    <property type="match status" value="1"/>
</dbReference>
<protein>
    <recommendedName>
        <fullName>Superoxide dismutase 1 copper chaperone</fullName>
    </recommendedName>
</protein>
<proteinExistence type="inferred from homology"/>
<feature type="chain" id="PRO_0000239061" description="Superoxide dismutase 1 copper chaperone">
    <location>
        <begin position="1"/>
        <end position="239"/>
    </location>
</feature>
<feature type="domain" description="HMA" evidence="3">
    <location>
        <begin position="7"/>
        <end position="70"/>
    </location>
</feature>
<feature type="binding site" evidence="3">
    <location>
        <position position="18"/>
    </location>
    <ligand>
        <name>Cu cation</name>
        <dbReference type="ChEBI" id="CHEBI:23378"/>
        <label>1</label>
    </ligand>
</feature>
<feature type="binding site" evidence="3">
    <location>
        <position position="21"/>
    </location>
    <ligand>
        <name>Cu cation</name>
        <dbReference type="ChEBI" id="CHEBI:23378"/>
        <label>1</label>
    </ligand>
</feature>
<feature type="binding site">
    <location>
        <position position="163"/>
    </location>
    <ligand>
        <name>Zn(2+)</name>
        <dbReference type="ChEBI" id="CHEBI:29105"/>
    </ligand>
</feature>
<feature type="binding site">
    <location>
        <position position="219"/>
    </location>
    <ligand>
        <name>Cu cation</name>
        <dbReference type="ChEBI" id="CHEBI:23378"/>
        <label>2</label>
    </ligand>
</feature>
<feature type="binding site">
    <location>
        <position position="221"/>
    </location>
    <ligand>
        <name>Cu cation</name>
        <dbReference type="ChEBI" id="CHEBI:23378"/>
        <label>2</label>
    </ligand>
</feature>
<feature type="disulfide bond" evidence="2">
    <location>
        <begin position="28"/>
        <end position="65"/>
    </location>
</feature>
<feature type="disulfide bond" description="Interchain (with C-58 in apo-SOD1)" evidence="2">
    <location>
        <position position="219"/>
    </location>
</feature>
<reference key="1">
    <citation type="journal article" date="2004" name="Nature">
        <title>Genome evolution in yeasts.</title>
        <authorList>
            <person name="Dujon B."/>
            <person name="Sherman D."/>
            <person name="Fischer G."/>
            <person name="Durrens P."/>
            <person name="Casaregola S."/>
            <person name="Lafontaine I."/>
            <person name="de Montigny J."/>
            <person name="Marck C."/>
            <person name="Neuveglise C."/>
            <person name="Talla E."/>
            <person name="Goffard N."/>
            <person name="Frangeul L."/>
            <person name="Aigle M."/>
            <person name="Anthouard V."/>
            <person name="Babour A."/>
            <person name="Barbe V."/>
            <person name="Barnay S."/>
            <person name="Blanchin S."/>
            <person name="Beckerich J.-M."/>
            <person name="Beyne E."/>
            <person name="Bleykasten C."/>
            <person name="Boisrame A."/>
            <person name="Boyer J."/>
            <person name="Cattolico L."/>
            <person name="Confanioleri F."/>
            <person name="de Daruvar A."/>
            <person name="Despons L."/>
            <person name="Fabre E."/>
            <person name="Fairhead C."/>
            <person name="Ferry-Dumazet H."/>
            <person name="Groppi A."/>
            <person name="Hantraye F."/>
            <person name="Hennequin C."/>
            <person name="Jauniaux N."/>
            <person name="Joyet P."/>
            <person name="Kachouri R."/>
            <person name="Kerrest A."/>
            <person name="Koszul R."/>
            <person name="Lemaire M."/>
            <person name="Lesur I."/>
            <person name="Ma L."/>
            <person name="Muller H."/>
            <person name="Nicaud J.-M."/>
            <person name="Nikolski M."/>
            <person name="Oztas S."/>
            <person name="Ozier-Kalogeropoulos O."/>
            <person name="Pellenz S."/>
            <person name="Potier S."/>
            <person name="Richard G.-F."/>
            <person name="Straub M.-L."/>
            <person name="Suleau A."/>
            <person name="Swennen D."/>
            <person name="Tekaia F."/>
            <person name="Wesolowski-Louvel M."/>
            <person name="Westhof E."/>
            <person name="Wirth B."/>
            <person name="Zeniou-Meyer M."/>
            <person name="Zivanovic Y."/>
            <person name="Bolotin-Fukuhara M."/>
            <person name="Thierry A."/>
            <person name="Bouchier C."/>
            <person name="Caudron B."/>
            <person name="Scarpelli C."/>
            <person name="Gaillardin C."/>
            <person name="Weissenbach J."/>
            <person name="Wincker P."/>
            <person name="Souciet J.-L."/>
        </authorList>
    </citation>
    <scope>NUCLEOTIDE SEQUENCE [LARGE SCALE GENOMIC DNA]</scope>
    <source>
        <strain>ATCC 2001 / BCRC 20586 / JCM 3761 / NBRC 0622 / NRRL Y-65 / CBS 138</strain>
    </source>
</reference>
<sequence>MTANADFYEATYAVPMHCTDCTDDIKKCLNGITGIKDLQFDISQQMMSVNSCVAPSVIINALRDCGRDAIIRGAGKPNSSAVAILETFEDVDLKKDTAVRGLARIVQVSDQKTLFDVTVNGVPFSGKYQAKIHSNGNISEGVKSTGDVYYKFEEPIECSDASDLDKSLYSGQNFVSAPLPIWDLIGRSFVIFREGEPAYDIAGVIARSAGVWENDKQVCACTGKTVWEERKDALKNNIK</sequence>
<organism>
    <name type="scientific">Candida glabrata (strain ATCC 2001 / BCRC 20586 / JCM 3761 / NBRC 0622 / NRRL Y-65 / CBS 138)</name>
    <name type="common">Yeast</name>
    <name type="synonym">Nakaseomyces glabratus</name>
    <dbReference type="NCBI Taxonomy" id="284593"/>
    <lineage>
        <taxon>Eukaryota</taxon>
        <taxon>Fungi</taxon>
        <taxon>Dikarya</taxon>
        <taxon>Ascomycota</taxon>
        <taxon>Saccharomycotina</taxon>
        <taxon>Saccharomycetes</taxon>
        <taxon>Saccharomycetales</taxon>
        <taxon>Saccharomycetaceae</taxon>
        <taxon>Nakaseomyces</taxon>
    </lineage>
</organism>
<gene>
    <name type="primary">CCS1</name>
    <name type="ordered locus">CAGL0F06017g</name>
</gene>
<name>CCS1_CANGA</name>
<comment type="function">
    <text evidence="1">Copper chaperone for superoxide dismutase 1 (SOD1). Binds copper ions and delivers them specifically to SOD1 (By similarity).</text>
</comment>
<comment type="cofactor">
    <cofactor evidence="1">
        <name>Cu(2+)</name>
        <dbReference type="ChEBI" id="CHEBI:29036"/>
    </cofactor>
    <text evidence="1">Binds 2 copper ions per subunit.</text>
</comment>
<comment type="subcellular location">
    <subcellularLocation>
        <location evidence="1">Cytoplasm</location>
    </subcellularLocation>
</comment>
<comment type="similarity">
    <text evidence="4">Belongs to the CCS1 family.</text>
</comment>